<organism>
    <name type="scientific">Vibrio parahaemolyticus serotype O3:K6 (strain RIMD 2210633)</name>
    <dbReference type="NCBI Taxonomy" id="223926"/>
    <lineage>
        <taxon>Bacteria</taxon>
        <taxon>Pseudomonadati</taxon>
        <taxon>Pseudomonadota</taxon>
        <taxon>Gammaproteobacteria</taxon>
        <taxon>Vibrionales</taxon>
        <taxon>Vibrionaceae</taxon>
        <taxon>Vibrio</taxon>
    </lineage>
</organism>
<feature type="chain" id="PRO_0000154886" description="tRNA sulfurtransferase">
    <location>
        <begin position="1"/>
        <end position="482"/>
    </location>
</feature>
<feature type="domain" description="THUMP" evidence="1">
    <location>
        <begin position="61"/>
        <end position="165"/>
    </location>
</feature>
<feature type="domain" description="Rhodanese" evidence="1">
    <location>
        <begin position="404"/>
        <end position="482"/>
    </location>
</feature>
<feature type="active site" description="Cysteine persulfide intermediate" evidence="1">
    <location>
        <position position="456"/>
    </location>
</feature>
<feature type="binding site" evidence="1">
    <location>
        <begin position="183"/>
        <end position="184"/>
    </location>
    <ligand>
        <name>ATP</name>
        <dbReference type="ChEBI" id="CHEBI:30616"/>
    </ligand>
</feature>
<feature type="binding site" evidence="1">
    <location>
        <position position="265"/>
    </location>
    <ligand>
        <name>ATP</name>
        <dbReference type="ChEBI" id="CHEBI:30616"/>
    </ligand>
</feature>
<feature type="binding site" evidence="1">
    <location>
        <position position="287"/>
    </location>
    <ligand>
        <name>ATP</name>
        <dbReference type="ChEBI" id="CHEBI:30616"/>
    </ligand>
</feature>
<feature type="binding site" evidence="1">
    <location>
        <position position="296"/>
    </location>
    <ligand>
        <name>ATP</name>
        <dbReference type="ChEBI" id="CHEBI:30616"/>
    </ligand>
</feature>
<feature type="disulfide bond" description="Redox-active" evidence="1">
    <location>
        <begin position="344"/>
        <end position="456"/>
    </location>
</feature>
<comment type="function">
    <text evidence="1">Catalyzes the ATP-dependent transfer of a sulfur to tRNA to produce 4-thiouridine in position 8 of tRNAs, which functions as a near-UV photosensor. Also catalyzes the transfer of sulfur to the sulfur carrier protein ThiS, forming ThiS-thiocarboxylate. This is a step in the synthesis of thiazole, in the thiamine biosynthesis pathway. The sulfur is donated as persulfide by IscS.</text>
</comment>
<comment type="catalytic activity">
    <reaction evidence="1">
        <text>[ThiI sulfur-carrier protein]-S-sulfanyl-L-cysteine + a uridine in tRNA + 2 reduced [2Fe-2S]-[ferredoxin] + ATP + H(+) = [ThiI sulfur-carrier protein]-L-cysteine + a 4-thiouridine in tRNA + 2 oxidized [2Fe-2S]-[ferredoxin] + AMP + diphosphate</text>
        <dbReference type="Rhea" id="RHEA:24176"/>
        <dbReference type="Rhea" id="RHEA-COMP:10000"/>
        <dbReference type="Rhea" id="RHEA-COMP:10001"/>
        <dbReference type="Rhea" id="RHEA-COMP:13337"/>
        <dbReference type="Rhea" id="RHEA-COMP:13338"/>
        <dbReference type="Rhea" id="RHEA-COMP:13339"/>
        <dbReference type="Rhea" id="RHEA-COMP:13340"/>
        <dbReference type="ChEBI" id="CHEBI:15378"/>
        <dbReference type="ChEBI" id="CHEBI:29950"/>
        <dbReference type="ChEBI" id="CHEBI:30616"/>
        <dbReference type="ChEBI" id="CHEBI:33019"/>
        <dbReference type="ChEBI" id="CHEBI:33737"/>
        <dbReference type="ChEBI" id="CHEBI:33738"/>
        <dbReference type="ChEBI" id="CHEBI:61963"/>
        <dbReference type="ChEBI" id="CHEBI:65315"/>
        <dbReference type="ChEBI" id="CHEBI:136798"/>
        <dbReference type="ChEBI" id="CHEBI:456215"/>
        <dbReference type="EC" id="2.8.1.4"/>
    </reaction>
</comment>
<comment type="catalytic activity">
    <reaction evidence="1">
        <text>[ThiS sulfur-carrier protein]-C-terminal Gly-Gly-AMP + S-sulfanyl-L-cysteinyl-[cysteine desulfurase] + AH2 = [ThiS sulfur-carrier protein]-C-terminal-Gly-aminoethanethioate + L-cysteinyl-[cysteine desulfurase] + A + AMP + 2 H(+)</text>
        <dbReference type="Rhea" id="RHEA:43340"/>
        <dbReference type="Rhea" id="RHEA-COMP:12157"/>
        <dbReference type="Rhea" id="RHEA-COMP:12158"/>
        <dbReference type="Rhea" id="RHEA-COMP:12910"/>
        <dbReference type="Rhea" id="RHEA-COMP:19908"/>
        <dbReference type="ChEBI" id="CHEBI:13193"/>
        <dbReference type="ChEBI" id="CHEBI:15378"/>
        <dbReference type="ChEBI" id="CHEBI:17499"/>
        <dbReference type="ChEBI" id="CHEBI:29950"/>
        <dbReference type="ChEBI" id="CHEBI:61963"/>
        <dbReference type="ChEBI" id="CHEBI:90618"/>
        <dbReference type="ChEBI" id="CHEBI:232372"/>
        <dbReference type="ChEBI" id="CHEBI:456215"/>
    </reaction>
</comment>
<comment type="pathway">
    <text evidence="1">Cofactor biosynthesis; thiamine diphosphate biosynthesis.</text>
</comment>
<comment type="subcellular location">
    <subcellularLocation>
        <location evidence="1">Cytoplasm</location>
    </subcellularLocation>
</comment>
<comment type="similarity">
    <text evidence="1">Belongs to the ThiI family.</text>
</comment>
<dbReference type="EC" id="2.8.1.4" evidence="1"/>
<dbReference type="EMBL" id="BA000031">
    <property type="protein sequence ID" value="BAC58954.1"/>
    <property type="molecule type" value="Genomic_DNA"/>
</dbReference>
<dbReference type="RefSeq" id="NP_797070.1">
    <property type="nucleotide sequence ID" value="NC_004603.1"/>
</dbReference>
<dbReference type="RefSeq" id="WP_005488737.1">
    <property type="nucleotide sequence ID" value="NC_004603.1"/>
</dbReference>
<dbReference type="SMR" id="Q87RT6"/>
<dbReference type="DNASU" id="1188166"/>
<dbReference type="GeneID" id="1188166"/>
<dbReference type="KEGG" id="vpa:VP0691"/>
<dbReference type="PATRIC" id="fig|223926.6.peg.660"/>
<dbReference type="eggNOG" id="COG0301">
    <property type="taxonomic scope" value="Bacteria"/>
</dbReference>
<dbReference type="eggNOG" id="COG0607">
    <property type="taxonomic scope" value="Bacteria"/>
</dbReference>
<dbReference type="HOGENOM" id="CLU_037952_4_1_6"/>
<dbReference type="UniPathway" id="UPA00060"/>
<dbReference type="Proteomes" id="UP000002493">
    <property type="component" value="Chromosome 1"/>
</dbReference>
<dbReference type="GO" id="GO:0005829">
    <property type="term" value="C:cytosol"/>
    <property type="evidence" value="ECO:0007669"/>
    <property type="project" value="TreeGrafter"/>
</dbReference>
<dbReference type="GO" id="GO:0005524">
    <property type="term" value="F:ATP binding"/>
    <property type="evidence" value="ECO:0007669"/>
    <property type="project" value="UniProtKB-UniRule"/>
</dbReference>
<dbReference type="GO" id="GO:0004810">
    <property type="term" value="F:CCA tRNA nucleotidyltransferase activity"/>
    <property type="evidence" value="ECO:0007669"/>
    <property type="project" value="InterPro"/>
</dbReference>
<dbReference type="GO" id="GO:0000049">
    <property type="term" value="F:tRNA binding"/>
    <property type="evidence" value="ECO:0007669"/>
    <property type="project" value="UniProtKB-UniRule"/>
</dbReference>
<dbReference type="GO" id="GO:0140741">
    <property type="term" value="F:tRNA-uracil-4 sulfurtransferase activity"/>
    <property type="evidence" value="ECO:0007669"/>
    <property type="project" value="UniProtKB-EC"/>
</dbReference>
<dbReference type="GO" id="GO:0009228">
    <property type="term" value="P:thiamine biosynthetic process"/>
    <property type="evidence" value="ECO:0007669"/>
    <property type="project" value="UniProtKB-KW"/>
</dbReference>
<dbReference type="GO" id="GO:0009229">
    <property type="term" value="P:thiamine diphosphate biosynthetic process"/>
    <property type="evidence" value="ECO:0007669"/>
    <property type="project" value="UniProtKB-UniRule"/>
</dbReference>
<dbReference type="GO" id="GO:0052837">
    <property type="term" value="P:thiazole biosynthetic process"/>
    <property type="evidence" value="ECO:0007669"/>
    <property type="project" value="InterPro"/>
</dbReference>
<dbReference type="GO" id="GO:0002937">
    <property type="term" value="P:tRNA 4-thiouridine biosynthesis"/>
    <property type="evidence" value="ECO:0007669"/>
    <property type="project" value="TreeGrafter"/>
</dbReference>
<dbReference type="CDD" id="cd01712">
    <property type="entry name" value="PPase_ThiI"/>
    <property type="match status" value="1"/>
</dbReference>
<dbReference type="CDD" id="cd00158">
    <property type="entry name" value="RHOD"/>
    <property type="match status" value="1"/>
</dbReference>
<dbReference type="CDD" id="cd11716">
    <property type="entry name" value="THUMP_ThiI"/>
    <property type="match status" value="1"/>
</dbReference>
<dbReference type="FunFam" id="3.40.250.10:FF:000003">
    <property type="entry name" value="tRNA sulfurtransferase"/>
    <property type="match status" value="1"/>
</dbReference>
<dbReference type="FunFam" id="3.40.50.620:FF:000029">
    <property type="entry name" value="tRNA sulfurtransferase"/>
    <property type="match status" value="1"/>
</dbReference>
<dbReference type="Gene3D" id="3.30.2130.30">
    <property type="match status" value="1"/>
</dbReference>
<dbReference type="Gene3D" id="3.40.50.620">
    <property type="entry name" value="HUPs"/>
    <property type="match status" value="1"/>
</dbReference>
<dbReference type="Gene3D" id="3.40.250.10">
    <property type="entry name" value="Rhodanese-like domain"/>
    <property type="match status" value="1"/>
</dbReference>
<dbReference type="HAMAP" id="MF_00021">
    <property type="entry name" value="ThiI"/>
    <property type="match status" value="1"/>
</dbReference>
<dbReference type="InterPro" id="IPR001763">
    <property type="entry name" value="Rhodanese-like_dom"/>
</dbReference>
<dbReference type="InterPro" id="IPR036873">
    <property type="entry name" value="Rhodanese-like_dom_sf"/>
</dbReference>
<dbReference type="InterPro" id="IPR014729">
    <property type="entry name" value="Rossmann-like_a/b/a_fold"/>
</dbReference>
<dbReference type="InterPro" id="IPR020536">
    <property type="entry name" value="ThiI_AANH"/>
</dbReference>
<dbReference type="InterPro" id="IPR054173">
    <property type="entry name" value="ThiI_fer"/>
</dbReference>
<dbReference type="InterPro" id="IPR049961">
    <property type="entry name" value="ThiI_N"/>
</dbReference>
<dbReference type="InterPro" id="IPR026340">
    <property type="entry name" value="THII_Thiazole_biosynth_dom"/>
</dbReference>
<dbReference type="InterPro" id="IPR004114">
    <property type="entry name" value="THUMP_dom"/>
</dbReference>
<dbReference type="InterPro" id="IPR049962">
    <property type="entry name" value="THUMP_ThiI"/>
</dbReference>
<dbReference type="InterPro" id="IPR003720">
    <property type="entry name" value="tRNA_STrfase"/>
</dbReference>
<dbReference type="InterPro" id="IPR050102">
    <property type="entry name" value="tRNA_sulfurtransferase_ThiI"/>
</dbReference>
<dbReference type="NCBIfam" id="TIGR04271">
    <property type="entry name" value="ThiI_C_thiazole"/>
    <property type="match status" value="1"/>
</dbReference>
<dbReference type="NCBIfam" id="TIGR00342">
    <property type="entry name" value="tRNA uracil 4-sulfurtransferase ThiI"/>
    <property type="match status" value="1"/>
</dbReference>
<dbReference type="PANTHER" id="PTHR43209">
    <property type="entry name" value="TRNA SULFURTRANSFERASE"/>
    <property type="match status" value="1"/>
</dbReference>
<dbReference type="PANTHER" id="PTHR43209:SF1">
    <property type="entry name" value="TRNA SULFURTRANSFERASE"/>
    <property type="match status" value="1"/>
</dbReference>
<dbReference type="Pfam" id="PF02568">
    <property type="entry name" value="ThiI"/>
    <property type="match status" value="1"/>
</dbReference>
<dbReference type="Pfam" id="PF22025">
    <property type="entry name" value="ThiI_fer"/>
    <property type="match status" value="1"/>
</dbReference>
<dbReference type="Pfam" id="PF02926">
    <property type="entry name" value="THUMP"/>
    <property type="match status" value="1"/>
</dbReference>
<dbReference type="SMART" id="SM00981">
    <property type="entry name" value="THUMP"/>
    <property type="match status" value="1"/>
</dbReference>
<dbReference type="SUPFAM" id="SSF52402">
    <property type="entry name" value="Adenine nucleotide alpha hydrolases-like"/>
    <property type="match status" value="1"/>
</dbReference>
<dbReference type="SUPFAM" id="SSF52821">
    <property type="entry name" value="Rhodanese/Cell cycle control phosphatase"/>
    <property type="match status" value="1"/>
</dbReference>
<dbReference type="SUPFAM" id="SSF143437">
    <property type="entry name" value="THUMP domain-like"/>
    <property type="match status" value="1"/>
</dbReference>
<dbReference type="PROSITE" id="PS50206">
    <property type="entry name" value="RHODANESE_3"/>
    <property type="match status" value="1"/>
</dbReference>
<dbReference type="PROSITE" id="PS51165">
    <property type="entry name" value="THUMP"/>
    <property type="match status" value="1"/>
</dbReference>
<accession>Q87RT6</accession>
<reference key="1">
    <citation type="journal article" date="2003" name="Lancet">
        <title>Genome sequence of Vibrio parahaemolyticus: a pathogenic mechanism distinct from that of V. cholerae.</title>
        <authorList>
            <person name="Makino K."/>
            <person name="Oshima K."/>
            <person name="Kurokawa K."/>
            <person name="Yokoyama K."/>
            <person name="Uda T."/>
            <person name="Tagomori K."/>
            <person name="Iijima Y."/>
            <person name="Najima M."/>
            <person name="Nakano M."/>
            <person name="Yamashita A."/>
            <person name="Kubota Y."/>
            <person name="Kimura S."/>
            <person name="Yasunaga T."/>
            <person name="Honda T."/>
            <person name="Shinagawa H."/>
            <person name="Hattori M."/>
            <person name="Iida T."/>
        </authorList>
    </citation>
    <scope>NUCLEOTIDE SEQUENCE [LARGE SCALE GENOMIC DNA]</scope>
    <source>
        <strain>RIMD 2210633</strain>
    </source>
</reference>
<proteinExistence type="inferred from homology"/>
<gene>
    <name evidence="1" type="primary">thiI</name>
    <name type="ordered locus">VP0691</name>
</gene>
<evidence type="ECO:0000255" key="1">
    <source>
        <dbReference type="HAMAP-Rule" id="MF_00021"/>
    </source>
</evidence>
<sequence>MKFIVKPHPEIFVKSESVRKRFTKILECNIRNIVKSRTESVAVFNRRDHIEVTSESNEYHAEVLEILTHTPGIHHVLEVKQSEFKDLHDIYEQVLELSRPLIENKTFVVRAKRRGKHDFTSIELERYVGGGLNQAVESARVKLHNPDVTVKVEVSGDKLNQVLARHKGLGGFPLGTQEDVLSLISGGFDSGVSSYLHIKRGSKVHYCFFNLGGPAHEIGVKQVSHYLWNKYGSSAKVRFISVDFEPVVAEILEKVDDGQMGVILKRMFMRAAGMIAEKFKIEALVTGEALGQVSSQTLTNLRHIDNVTDTLILRPLINWDKEDIINLAREIGTEDFAKTMPEYCGVISKKPTVKAVKEKLEAEEAKFDFSILEKVVYEARQMDIRDIAKESEQAAPEVEQVQAVEEHAVVLDIRSPDEEDDNPLEIAGVDVKHIPFYKLGTQFGDLDQSKTYLLYCDRGVMSRLQALYLQEQGFNNVKVYRP</sequence>
<name>THII_VIBPA</name>
<keyword id="KW-0067">ATP-binding</keyword>
<keyword id="KW-0963">Cytoplasm</keyword>
<keyword id="KW-1015">Disulfide bond</keyword>
<keyword id="KW-0547">Nucleotide-binding</keyword>
<keyword id="KW-0676">Redox-active center</keyword>
<keyword id="KW-0694">RNA-binding</keyword>
<keyword id="KW-0784">Thiamine biosynthesis</keyword>
<keyword id="KW-0808">Transferase</keyword>
<keyword id="KW-0820">tRNA-binding</keyword>
<protein>
    <recommendedName>
        <fullName evidence="1">tRNA sulfurtransferase</fullName>
        <ecNumber evidence="1">2.8.1.4</ecNumber>
    </recommendedName>
    <alternativeName>
        <fullName evidence="1">Sulfur carrier protein ThiS sulfurtransferase</fullName>
    </alternativeName>
    <alternativeName>
        <fullName evidence="1">Thiamine biosynthesis protein ThiI</fullName>
    </alternativeName>
    <alternativeName>
        <fullName evidence="1">tRNA 4-thiouridine synthase</fullName>
    </alternativeName>
</protein>